<proteinExistence type="evidence at protein level"/>
<name>CD5R1_BOVIN</name>
<organism>
    <name type="scientific">Bos taurus</name>
    <name type="common">Bovine</name>
    <dbReference type="NCBI Taxonomy" id="9913"/>
    <lineage>
        <taxon>Eukaryota</taxon>
        <taxon>Metazoa</taxon>
        <taxon>Chordata</taxon>
        <taxon>Craniata</taxon>
        <taxon>Vertebrata</taxon>
        <taxon>Euteleostomi</taxon>
        <taxon>Mammalia</taxon>
        <taxon>Eutheria</taxon>
        <taxon>Laurasiatheria</taxon>
        <taxon>Artiodactyla</taxon>
        <taxon>Ruminantia</taxon>
        <taxon>Pecora</taxon>
        <taxon>Bovidae</taxon>
        <taxon>Bovinae</taxon>
        <taxon>Bos</taxon>
    </lineage>
</organism>
<keyword id="KW-0090">Biological rhythms</keyword>
<keyword id="KW-1003">Cell membrane</keyword>
<keyword id="KW-0966">Cell projection</keyword>
<keyword id="KW-0963">Cytoplasm</keyword>
<keyword id="KW-0903">Direct protein sequencing</keyword>
<keyword id="KW-0449">Lipoprotein</keyword>
<keyword id="KW-0472">Membrane</keyword>
<keyword id="KW-0519">Myristate</keyword>
<keyword id="KW-0539">Nucleus</keyword>
<keyword id="KW-0597">Phosphoprotein</keyword>
<keyword id="KW-1185">Reference proteome</keyword>
<keyword id="KW-0832">Ubl conjugation</keyword>
<reference key="1">
    <citation type="journal article" date="1994" name="FEBS Lett.">
        <title>Precursor of cdk5 activator, the 23 kDa subunit of tau protein kinase II: its sequence and developmental change in brain.</title>
        <authorList>
            <person name="Uchida T."/>
            <person name="Ishiguro K."/>
            <person name="Ohnuma J."/>
            <person name="Takamatsu M."/>
            <person name="Yonekura S."/>
            <person name="Imahori K."/>
        </authorList>
    </citation>
    <scope>NUCLEOTIDE SEQUENCE [MRNA]</scope>
    <source>
        <tissue>Brain cortex</tissue>
    </source>
</reference>
<reference key="2">
    <citation type="journal article" date="1994" name="Nature">
        <title>A brain-specific activator of cyclin-dependent kinase 5.</title>
        <authorList>
            <person name="Lew J."/>
            <person name="Huang Q.-Q."/>
            <person name="Qi Z."/>
            <person name="Winkfein R.J."/>
            <person name="Aebersold R."/>
            <person name="Hunt T."/>
            <person name="Wang J.H."/>
        </authorList>
    </citation>
    <scope>NUCLEOTIDE SEQUENCE [MRNA]</scope>
    <scope>PARTIAL PROTEIN SEQUENCE</scope>
    <source>
        <tissue>Brain</tissue>
    </source>
</reference>
<reference key="3">
    <citation type="submission" date="2006-08" db="EMBL/GenBank/DDBJ databases">
        <authorList>
            <consortium name="NIH - Mammalian Gene Collection (MGC) project"/>
        </authorList>
    </citation>
    <scope>NUCLEOTIDE SEQUENCE [LARGE SCALE MRNA]</scope>
    <source>
        <strain>Crossbred X Angus</strain>
        <tissue>Liver</tissue>
    </source>
</reference>
<reference key="4">
    <citation type="journal article" date="1994" name="FEBS Lett.">
        <title>Identification of the 23 kDa subunit of tau protein kinase II as a putative activator of cdk5 in bovine brain.</title>
        <authorList>
            <person name="Ishiguro K."/>
            <person name="Kobayashi S."/>
            <person name="Omori A."/>
            <person name="Takamatsu M."/>
            <person name="Yonekura S."/>
            <person name="Anzai K."/>
            <person name="Imahori K."/>
            <person name="Uchida T."/>
        </authorList>
    </citation>
    <scope>NUCLEOTIDE SEQUENCE [MRNA] OF 99-307</scope>
    <scope>PARTIAL PROTEIN SEQUENCE</scope>
    <source>
        <tissue>Brain cortex</tissue>
    </source>
</reference>
<accession>Q28199</accession>
<accession>Q0II69</accession>
<accession>Q28865</accession>
<accession>Q29462</accession>
<comment type="function">
    <text evidence="3">p35 is a neuron specific activator of CDK5. The complex p35/CDK5 is required for neurite outgrowth and cortical lamination. Involved in dendritic spine morphogenesis by mediating the EFNA1-EPHA4 signaling. Activator of TPKII. The complex p35/CDK5 participates in the regulation of the circadian clock by modulating the function of CLOCK protein: phosphorylates CLOCK at 'Thr-451' and 'Thr-461' and regulates the transcriptional activity of the CLOCK-BMAL1 heterodimer in association with altered stability and subcellular distribution.</text>
</comment>
<comment type="subunit">
    <text evidence="2 3">Heterodimer composed of a catalytic subunit CDK5 and a regulatory subunit CDK5R1 (p25) and macromolecular complex composed of at least CDK5, CDK5R1 (p35) and CDK5RAP1 or CDK5RAP2 or CDK5RAP3. Only the heterodimer shows kinase activity (By similarity). Interacts with EPHA4 and NGEF; may mediate the activation of NGEF by EPHA4 (By similarity). Interacts with RASGRF2. The complex p35/CDK5 interacts with CLOCK (By similarity).</text>
</comment>
<comment type="subcellular location">
    <molecule>Cyclin-dependent kinase 5 activator 1, p35</molecule>
    <subcellularLocation>
        <location evidence="3">Cell membrane</location>
        <topology evidence="3">Lipid-anchor</topology>
        <orientation evidence="3">Cytoplasmic side</orientation>
    </subcellularLocation>
    <subcellularLocation>
        <location evidence="3">Cell projection</location>
        <location evidence="3">Neuron projection</location>
    </subcellularLocation>
    <text evidence="3">In the primary cortical neurons, p35 is present in the peripheries and nerve terminals.</text>
</comment>
<comment type="subcellular location">
    <molecule>Cyclin-dependent kinase 5 activator 1, p25</molecule>
    <subcellularLocation>
        <location evidence="3">Nucleus</location>
    </subcellularLocation>
    <subcellularLocation>
        <location evidence="3">Cytoplasm</location>
        <location evidence="3">Perinuclear region</location>
    </subcellularLocation>
    <subcellularLocation>
        <location evidence="3">Perikaryon</location>
    </subcellularLocation>
    <text evidence="3">The conversion of p35 to p25 relocalizes the protein from the cell periphery to the cytoplasm, in nuclear and perinuclear regions. In the primary cortical neurons, p25 is primarily concentrated in the cell soma and is largely absent from neurites.</text>
</comment>
<comment type="tissue specificity">
    <text>Brain and neuron specific.</text>
</comment>
<comment type="PTM">
    <text evidence="2">The p35 form is proteolytically cleaved by calpain, giving rise to the p25 form. P35 has a 5 to 10 fold shorter half-life compared to p25. The conversion results in deregulation of the CDK5 kinase: p25/CDK5 kinase displays an increased and altered tau phosphorylation in comparison to the p35/CDK5 kinase in vivo (By similarity).</text>
</comment>
<comment type="PTM">
    <text evidence="3">Myristoylated. A proper myristoylation signal is essential for the proper distribution of p35 (By similarity).</text>
</comment>
<comment type="PTM">
    <text evidence="3">Phosphorylation at Ser-8 and Thr-138 by CDK5 prevents calpain-mediated proteolysis.</text>
</comment>
<comment type="PTM">
    <text evidence="3">Ubiquitinated, leading to its degradation: degradation of p35 by proteasome results in down-regulation of CDK5 activity. During this process, CDK5 phosphorylates p35 and induces its ubiquitination and subsequent degradation. Ubiquitinated by the CRL2(FEM1B) complex, which recognizes the -Gly-Leu-Asp-Arg C-degron at the C-terminus, leading to its degradation.</text>
</comment>
<comment type="similarity">
    <text evidence="5">Belongs to the cyclin-dependent kinase 5 activator family.</text>
</comment>
<evidence type="ECO:0000250" key="1"/>
<evidence type="ECO:0000250" key="2">
    <source>
        <dbReference type="UniProtKB" id="P61809"/>
    </source>
</evidence>
<evidence type="ECO:0000250" key="3">
    <source>
        <dbReference type="UniProtKB" id="Q15078"/>
    </source>
</evidence>
<evidence type="ECO:0000256" key="4">
    <source>
        <dbReference type="SAM" id="MobiDB-lite"/>
    </source>
</evidence>
<evidence type="ECO:0000305" key="5"/>
<protein>
    <recommendedName>
        <fullName>Cyclin-dependent kinase 5 activator 1</fullName>
        <shortName>CDK5 activator 1</shortName>
    </recommendedName>
    <alternativeName>
        <fullName>Cyclin-dependent kinase 5 regulatory subunit 1</fullName>
    </alternativeName>
    <alternativeName>
        <fullName>TPKII regulatory subunit</fullName>
    </alternativeName>
    <component>
        <recommendedName>
            <fullName>Cyclin-dependent kinase 5 activator 1, p35</fullName>
            <shortName>p35</shortName>
        </recommendedName>
    </component>
    <component>
        <recommendedName>
            <fullName>Cyclin-dependent kinase 5 activator 1, p25</fullName>
            <shortName>p25</shortName>
        </recommendedName>
        <alternativeName>
            <fullName>Tau protein kinase II 23 kDa subunit</fullName>
            <shortName>p23</shortName>
        </alternativeName>
    </component>
</protein>
<gene>
    <name type="primary">CDK5R1</name>
    <name type="synonym">CDK5R</name>
    <name type="synonym">NCK5A</name>
</gene>
<feature type="initiator methionine" description="Removed" evidence="3">
    <location>
        <position position="1"/>
    </location>
</feature>
<feature type="chain" id="PRO_0000004792" description="Cyclin-dependent kinase 5 activator 1, p35">
    <location>
        <begin position="2"/>
        <end position="307"/>
    </location>
</feature>
<feature type="chain" id="PRO_0000004793" description="Cyclin-dependent kinase 5 activator 1, p25">
    <location>
        <begin position="99"/>
        <end position="307"/>
    </location>
</feature>
<feature type="region of interest" description="Disordered" evidence="4">
    <location>
        <begin position="97"/>
        <end position="135"/>
    </location>
</feature>
<feature type="compositionally biased region" description="Pro residues" evidence="4">
    <location>
        <begin position="100"/>
        <end position="110"/>
    </location>
</feature>
<feature type="compositionally biased region" description="Polar residues" evidence="4">
    <location>
        <begin position="112"/>
        <end position="125"/>
    </location>
</feature>
<feature type="site" description="Cleavage; by calpain" evidence="2">
    <location>
        <begin position="98"/>
        <end position="99"/>
    </location>
</feature>
<feature type="modified residue" description="Phosphoserine; by CDK5" evidence="3">
    <location>
        <position position="8"/>
    </location>
</feature>
<feature type="modified residue" description="Phosphothreonine; by CDK5" evidence="3">
    <location>
        <position position="138"/>
    </location>
</feature>
<feature type="lipid moiety-binding region" description="N-myristoyl glycine" evidence="1">
    <location>
        <position position="2"/>
    </location>
</feature>
<feature type="sequence conflict" description="In Ref. 4; CAA55481." evidence="5" ref="4">
    <original>L</original>
    <variation>V</variation>
    <location>
        <position position="114"/>
    </location>
</feature>
<feature type="sequence conflict" description="In Ref. 1; CAA55534 and 4; CAA55481." evidence="5" ref="1 4">
    <original>WL</original>
    <variation>CV</variation>
    <location>
        <begin position="177"/>
        <end position="178"/>
    </location>
</feature>
<feature type="sequence conflict" description="In Ref. 3; AAI22780." evidence="5" ref="3">
    <original>S</original>
    <variation>R</variation>
    <location>
        <position position="180"/>
    </location>
</feature>
<feature type="sequence conflict" description="In Ref. 3; AAI22780." evidence="5" ref="3">
    <original>S</original>
    <variation>T</variation>
    <location>
        <position position="270"/>
    </location>
</feature>
<sequence length="307" mass="34088">MGTVLSLSPSYRKATLFEDGAATVGHYTAVQNSKNAKDKNLKRHSIISVLPWKRIVAVSAKKKNSKKVQPNSSYQNNITHLNNENLKKSLSCANLSTFAQPPPAQPPAPPASQLSGSQTGVSSSVKKAPHPAVSSAGTPKRVIVQASTSELLRCLGEFLCRRCYRLKHLSPTDPVLWLRSVDRSLLLQGWQDQGFITPANVVFLYMLCRDVISSEVGSDHELQAVLLTCLYLSYSYMGNEISYPLKPFLVESCKEAFWDRCLSVINLMSSKMLQINADPHYFTQVFSDLKNESGQEDKKRLLLGLDR</sequence>
<dbReference type="EMBL" id="X78934">
    <property type="protein sequence ID" value="CAA55534.1"/>
    <property type="molecule type" value="mRNA"/>
</dbReference>
<dbReference type="EMBL" id="S73375">
    <property type="protein sequence ID" value="AAB31984.1"/>
    <property type="molecule type" value="mRNA"/>
</dbReference>
<dbReference type="EMBL" id="BC122779">
    <property type="protein sequence ID" value="AAI22780.1"/>
    <property type="molecule type" value="mRNA"/>
</dbReference>
<dbReference type="EMBL" id="X78883">
    <property type="protein sequence ID" value="CAA55481.1"/>
    <property type="molecule type" value="mRNA"/>
</dbReference>
<dbReference type="PIR" id="S50850">
    <property type="entry name" value="S50850"/>
</dbReference>
<dbReference type="PIR" id="S51373">
    <property type="entry name" value="S51373"/>
</dbReference>
<dbReference type="RefSeq" id="NP_776937.2">
    <property type="nucleotide sequence ID" value="NM_174512.3"/>
</dbReference>
<dbReference type="SMR" id="Q28199"/>
<dbReference type="BioGRID" id="159447">
    <property type="interactions" value="6"/>
</dbReference>
<dbReference type="CORUM" id="Q28199"/>
<dbReference type="FunCoup" id="Q28199">
    <property type="interactions" value="1206"/>
</dbReference>
<dbReference type="IntAct" id="Q28199">
    <property type="interactions" value="3"/>
</dbReference>
<dbReference type="MINT" id="Q28199"/>
<dbReference type="STRING" id="9913.ENSBTAP00000052270"/>
<dbReference type="PaxDb" id="9913-ENSBTAP00000052270"/>
<dbReference type="Ensembl" id="ENSBTAT00000056064.4">
    <property type="protein sequence ID" value="ENSBTAP00000052270.2"/>
    <property type="gene ID" value="ENSBTAG00000004475.7"/>
</dbReference>
<dbReference type="Ensembl" id="ENSBTAT00000102895.1">
    <property type="protein sequence ID" value="ENSBTAP00000083589.1"/>
    <property type="gene ID" value="ENSBTAG00000004475.7"/>
</dbReference>
<dbReference type="Ensembl" id="ENSBTAT00000105486.1">
    <property type="protein sequence ID" value="ENSBTAP00000100438.1"/>
    <property type="gene ID" value="ENSBTAG00000004475.7"/>
</dbReference>
<dbReference type="Ensembl" id="ENSBTAT00000113707.1">
    <property type="protein sequence ID" value="ENSBTAP00000100755.1"/>
    <property type="gene ID" value="ENSBTAG00000004475.7"/>
</dbReference>
<dbReference type="Ensembl" id="ENSBTAT00000115964.1">
    <property type="protein sequence ID" value="ENSBTAP00000076307.1"/>
    <property type="gene ID" value="ENSBTAG00000004475.7"/>
</dbReference>
<dbReference type="Ensembl" id="ENSBTAT00000122147.1">
    <property type="protein sequence ID" value="ENSBTAP00000100165.1"/>
    <property type="gene ID" value="ENSBTAG00000004475.7"/>
</dbReference>
<dbReference type="Ensembl" id="ENSBTAT00000123040.1">
    <property type="protein sequence ID" value="ENSBTAP00000081136.1"/>
    <property type="gene ID" value="ENSBTAG00000004475.7"/>
</dbReference>
<dbReference type="GeneID" id="282173"/>
<dbReference type="KEGG" id="bta:282173"/>
<dbReference type="CTD" id="8851"/>
<dbReference type="VEuPathDB" id="HostDB:ENSBTAG00000004475"/>
<dbReference type="VGNC" id="VGNC:27128">
    <property type="gene designation" value="CDK5R1"/>
</dbReference>
<dbReference type="eggNOG" id="KOG3932">
    <property type="taxonomic scope" value="Eukaryota"/>
</dbReference>
<dbReference type="GeneTree" id="ENSGT00390000008812"/>
<dbReference type="HOGENOM" id="CLU_034132_2_0_1"/>
<dbReference type="InParanoid" id="Q28199"/>
<dbReference type="OMA" id="QHCNQNQ"/>
<dbReference type="OrthoDB" id="7676799at2759"/>
<dbReference type="TreeFam" id="TF101036"/>
<dbReference type="Reactome" id="R-BTA-399956">
    <property type="pathway name" value="CRMPs in Sema3A signaling"/>
</dbReference>
<dbReference type="Reactome" id="R-BTA-6804756">
    <property type="pathway name" value="Regulation of TP53 Activity through Phosphorylation"/>
</dbReference>
<dbReference type="Proteomes" id="UP000009136">
    <property type="component" value="Chromosome 19"/>
</dbReference>
<dbReference type="Bgee" id="ENSBTAG00000004475">
    <property type="expression patterns" value="Expressed in occipital lobe and 96 other cell types or tissues"/>
</dbReference>
<dbReference type="GO" id="GO:0030424">
    <property type="term" value="C:axon"/>
    <property type="evidence" value="ECO:0000250"/>
    <property type="project" value="UniProtKB"/>
</dbReference>
<dbReference type="GO" id="GO:0043292">
    <property type="term" value="C:contractile muscle fiber"/>
    <property type="evidence" value="ECO:0000250"/>
    <property type="project" value="UniProtKB"/>
</dbReference>
<dbReference type="GO" id="GO:0000307">
    <property type="term" value="C:cyclin-dependent protein kinase holoenzyme complex"/>
    <property type="evidence" value="ECO:0007669"/>
    <property type="project" value="Ensembl"/>
</dbReference>
<dbReference type="GO" id="GO:0005737">
    <property type="term" value="C:cytoplasm"/>
    <property type="evidence" value="ECO:0000250"/>
    <property type="project" value="UniProtKB"/>
</dbReference>
<dbReference type="GO" id="GO:0030425">
    <property type="term" value="C:dendrite"/>
    <property type="evidence" value="ECO:0000250"/>
    <property type="project" value="UniProtKB"/>
</dbReference>
<dbReference type="GO" id="GO:0043197">
    <property type="term" value="C:dendritic spine"/>
    <property type="evidence" value="ECO:0000250"/>
    <property type="project" value="UniProtKB"/>
</dbReference>
<dbReference type="GO" id="GO:0030426">
    <property type="term" value="C:growth cone"/>
    <property type="evidence" value="ECO:0000314"/>
    <property type="project" value="ARUK-UCL"/>
</dbReference>
<dbReference type="GO" id="GO:0016020">
    <property type="term" value="C:membrane"/>
    <property type="evidence" value="ECO:0000250"/>
    <property type="project" value="UniProtKB"/>
</dbReference>
<dbReference type="GO" id="GO:0031594">
    <property type="term" value="C:neuromuscular junction"/>
    <property type="evidence" value="ECO:0000250"/>
    <property type="project" value="UniProtKB"/>
</dbReference>
<dbReference type="GO" id="GO:0043005">
    <property type="term" value="C:neuron projection"/>
    <property type="evidence" value="ECO:0000314"/>
    <property type="project" value="ARUK-UCL"/>
</dbReference>
<dbReference type="GO" id="GO:0043025">
    <property type="term" value="C:neuronal cell body"/>
    <property type="evidence" value="ECO:0000250"/>
    <property type="project" value="UniProtKB"/>
</dbReference>
<dbReference type="GO" id="GO:0005654">
    <property type="term" value="C:nucleoplasm"/>
    <property type="evidence" value="ECO:0007669"/>
    <property type="project" value="Ensembl"/>
</dbReference>
<dbReference type="GO" id="GO:0005634">
    <property type="term" value="C:nucleus"/>
    <property type="evidence" value="ECO:0000250"/>
    <property type="project" value="UniProtKB"/>
</dbReference>
<dbReference type="GO" id="GO:0043204">
    <property type="term" value="C:perikaryon"/>
    <property type="evidence" value="ECO:0007669"/>
    <property type="project" value="UniProtKB-SubCell"/>
</dbReference>
<dbReference type="GO" id="GO:0048471">
    <property type="term" value="C:perinuclear region of cytoplasm"/>
    <property type="evidence" value="ECO:0007669"/>
    <property type="project" value="UniProtKB-SubCell"/>
</dbReference>
<dbReference type="GO" id="GO:0005886">
    <property type="term" value="C:plasma membrane"/>
    <property type="evidence" value="ECO:0007669"/>
    <property type="project" value="UniProtKB-SubCell"/>
</dbReference>
<dbReference type="GO" id="GO:0014069">
    <property type="term" value="C:postsynaptic density"/>
    <property type="evidence" value="ECO:0000250"/>
    <property type="project" value="UniProtKB"/>
</dbReference>
<dbReference type="GO" id="GO:0016533">
    <property type="term" value="C:protein kinase 5 complex"/>
    <property type="evidence" value="ECO:0007669"/>
    <property type="project" value="Ensembl"/>
</dbReference>
<dbReference type="GO" id="GO:0051015">
    <property type="term" value="F:actin filament binding"/>
    <property type="evidence" value="ECO:0007669"/>
    <property type="project" value="Ensembl"/>
</dbReference>
<dbReference type="GO" id="GO:0043014">
    <property type="term" value="F:alpha-tubulin binding"/>
    <property type="evidence" value="ECO:0000314"/>
    <property type="project" value="ARUK-UCL"/>
</dbReference>
<dbReference type="GO" id="GO:0048487">
    <property type="term" value="F:beta-tubulin binding"/>
    <property type="evidence" value="ECO:0000314"/>
    <property type="project" value="ARUK-UCL"/>
</dbReference>
<dbReference type="GO" id="GO:0045296">
    <property type="term" value="F:cadherin binding"/>
    <property type="evidence" value="ECO:0000250"/>
    <property type="project" value="UniProtKB"/>
</dbReference>
<dbReference type="GO" id="GO:0005509">
    <property type="term" value="F:calcium ion binding"/>
    <property type="evidence" value="ECO:0000250"/>
    <property type="project" value="UniProtKB"/>
</dbReference>
<dbReference type="GO" id="GO:0061575">
    <property type="term" value="F:cyclin-dependent protein serine/threonine kinase activator activity"/>
    <property type="evidence" value="ECO:0000318"/>
    <property type="project" value="GO_Central"/>
</dbReference>
<dbReference type="GO" id="GO:0035255">
    <property type="term" value="F:ionotropic glutamate receptor binding"/>
    <property type="evidence" value="ECO:0007669"/>
    <property type="project" value="Ensembl"/>
</dbReference>
<dbReference type="GO" id="GO:0016301">
    <property type="term" value="F:kinase activity"/>
    <property type="evidence" value="ECO:0000250"/>
    <property type="project" value="UniProtKB"/>
</dbReference>
<dbReference type="GO" id="GO:0002020">
    <property type="term" value="F:protease binding"/>
    <property type="evidence" value="ECO:0007669"/>
    <property type="project" value="Ensembl"/>
</dbReference>
<dbReference type="GO" id="GO:0019901">
    <property type="term" value="F:protein kinase binding"/>
    <property type="evidence" value="ECO:0000318"/>
    <property type="project" value="GO_Central"/>
</dbReference>
<dbReference type="GO" id="GO:0043539">
    <property type="term" value="F:protein serine/threonine kinase activator activity"/>
    <property type="evidence" value="ECO:0000250"/>
    <property type="project" value="UniProtKB"/>
</dbReference>
<dbReference type="GO" id="GO:0007411">
    <property type="term" value="P:axon guidance"/>
    <property type="evidence" value="ECO:0000250"/>
    <property type="project" value="UniProtKB"/>
</dbReference>
<dbReference type="GO" id="GO:0007413">
    <property type="term" value="P:axonal fasciculation"/>
    <property type="evidence" value="ECO:0000250"/>
    <property type="project" value="UniProtKB"/>
</dbReference>
<dbReference type="GO" id="GO:0007420">
    <property type="term" value="P:brain development"/>
    <property type="evidence" value="ECO:0000250"/>
    <property type="project" value="UniProtKB"/>
</dbReference>
<dbReference type="GO" id="GO:0021549">
    <property type="term" value="P:cerebellum development"/>
    <property type="evidence" value="ECO:0007669"/>
    <property type="project" value="Ensembl"/>
</dbReference>
<dbReference type="GO" id="GO:0009792">
    <property type="term" value="P:embryo development ending in birth or egg hatching"/>
    <property type="evidence" value="ECO:0000250"/>
    <property type="project" value="UniProtKB"/>
</dbReference>
<dbReference type="GO" id="GO:0048013">
    <property type="term" value="P:ephrin receptor signaling pathway"/>
    <property type="evidence" value="ECO:0000250"/>
    <property type="project" value="UniProtKB"/>
</dbReference>
<dbReference type="GO" id="GO:0007213">
    <property type="term" value="P:G protein-coupled acetylcholine receptor signaling pathway"/>
    <property type="evidence" value="ECO:0000250"/>
    <property type="project" value="UniProtKB"/>
</dbReference>
<dbReference type="GO" id="GO:0070315">
    <property type="term" value="P:G1 to G0 transition involved in cell differentiation"/>
    <property type="evidence" value="ECO:0007669"/>
    <property type="project" value="Ensembl"/>
</dbReference>
<dbReference type="GO" id="GO:0021766">
    <property type="term" value="P:hippocampus development"/>
    <property type="evidence" value="ECO:0007669"/>
    <property type="project" value="Ensembl"/>
</dbReference>
<dbReference type="GO" id="GO:0035235">
    <property type="term" value="P:ionotropic glutamate receptor signaling pathway"/>
    <property type="evidence" value="ECO:0000250"/>
    <property type="project" value="UniProtKB"/>
</dbReference>
<dbReference type="GO" id="GO:0021819">
    <property type="term" value="P:layer formation in cerebral cortex"/>
    <property type="evidence" value="ECO:0007669"/>
    <property type="project" value="Ensembl"/>
</dbReference>
<dbReference type="GO" id="GO:0045892">
    <property type="term" value="P:negative regulation of DNA-templated transcription"/>
    <property type="evidence" value="ECO:0007669"/>
    <property type="project" value="Ensembl"/>
</dbReference>
<dbReference type="GO" id="GO:0007158">
    <property type="term" value="P:neuron cell-cell adhesion"/>
    <property type="evidence" value="ECO:0000250"/>
    <property type="project" value="UniProtKB"/>
</dbReference>
<dbReference type="GO" id="GO:0030182">
    <property type="term" value="P:neuron differentiation"/>
    <property type="evidence" value="ECO:0000250"/>
    <property type="project" value="UniProtKB"/>
</dbReference>
<dbReference type="GO" id="GO:0001764">
    <property type="term" value="P:neuron migration"/>
    <property type="evidence" value="ECO:0000250"/>
    <property type="project" value="UniProtKB"/>
</dbReference>
<dbReference type="GO" id="GO:0031175">
    <property type="term" value="P:neuron projection development"/>
    <property type="evidence" value="ECO:0000250"/>
    <property type="project" value="UniProtKB"/>
</dbReference>
<dbReference type="GO" id="GO:0031116">
    <property type="term" value="P:positive regulation of microtubule polymerization"/>
    <property type="evidence" value="ECO:0000314"/>
    <property type="project" value="ARUK-UCL"/>
</dbReference>
<dbReference type="GO" id="GO:0043525">
    <property type="term" value="P:positive regulation of neuron apoptotic process"/>
    <property type="evidence" value="ECO:0000250"/>
    <property type="project" value="UniProtKB"/>
</dbReference>
<dbReference type="GO" id="GO:0090314">
    <property type="term" value="P:positive regulation of protein targeting to membrane"/>
    <property type="evidence" value="ECO:0007669"/>
    <property type="project" value="Ensembl"/>
</dbReference>
<dbReference type="GO" id="GO:0032956">
    <property type="term" value="P:regulation of actin cytoskeleton organization"/>
    <property type="evidence" value="ECO:0007669"/>
    <property type="project" value="Ensembl"/>
</dbReference>
<dbReference type="GO" id="GO:0061001">
    <property type="term" value="P:regulation of dendritic spine morphogenesis"/>
    <property type="evidence" value="ECO:0000250"/>
    <property type="project" value="UniProtKB"/>
</dbReference>
<dbReference type="GO" id="GO:0048511">
    <property type="term" value="P:rhythmic process"/>
    <property type="evidence" value="ECO:0007669"/>
    <property type="project" value="UniProtKB-KW"/>
</dbReference>
<dbReference type="GO" id="GO:0021722">
    <property type="term" value="P:superior olivary nucleus maturation"/>
    <property type="evidence" value="ECO:0007669"/>
    <property type="project" value="Ensembl"/>
</dbReference>
<dbReference type="FunFam" id="1.10.472.10:FF:000025">
    <property type="entry name" value="Cyclin-dependent kinase 5 activator"/>
    <property type="match status" value="1"/>
</dbReference>
<dbReference type="Gene3D" id="1.10.472.10">
    <property type="entry name" value="Cyclin-like"/>
    <property type="match status" value="1"/>
</dbReference>
<dbReference type="InterPro" id="IPR004944">
    <property type="entry name" value="CDK5_activator"/>
</dbReference>
<dbReference type="InterPro" id="IPR036915">
    <property type="entry name" value="Cyclin-like_sf"/>
</dbReference>
<dbReference type="PANTHER" id="PTHR23401">
    <property type="entry name" value="CYCLIN DEPENDANT KINASE-5 ACTIVATOR"/>
    <property type="match status" value="1"/>
</dbReference>
<dbReference type="PANTHER" id="PTHR23401:SF2">
    <property type="entry name" value="CYCLIN-DEPENDENT KINASE 5 ACTIVATOR 1"/>
    <property type="match status" value="1"/>
</dbReference>
<dbReference type="Pfam" id="PF03261">
    <property type="entry name" value="CDK5_activator"/>
    <property type="match status" value="1"/>
</dbReference>
<dbReference type="PIRSF" id="PIRSF009324">
    <property type="entry name" value="Cdk5_activator"/>
    <property type="match status" value="1"/>
</dbReference>
<dbReference type="SUPFAM" id="SSF47954">
    <property type="entry name" value="Cyclin-like"/>
    <property type="match status" value="1"/>
</dbReference>